<sequence length="548" mass="60927">MSAIYNLEPQPTASVIIHTTRGELSVELFAKQAPLTCRNFLQLALDGYYDNTIFHRLVPGFILQGGDPTGTGNGGESIYDGGAFSGDLDPWPMDQRMGKNAGPTGINFKDEFHSRLKFNRRGLLGSANESRPDTNSSQFFFTLDTAEELNGKNTMFGRIAGDTVYNLAKMGEGEVDEATERPTYPVKIERIEILINPFEDMKKRSRVAAVAPSKTTTTKDKKKKRKGGKQLLSFGDDEGDDEMPVLKKKKFDPRIVMEAPEEAPEQDEVRSKPTKAKKERASEKRVSIAQEEQDNSDQTTPREPPKEVRQKPAPPVKMEIEDESPEPEAPRKTALERANEEMAALKASMRRTIHSEEPVKEKKKSALESMIPETSMRGRKRRPGAANTSAADDAKALRMLKAFQSRLEKAPPEKENEPAARETTKDGEDAQAGDEEAELCDLHFIANCQSCTSWDKQEKDESDDEGWMSHALSFAADKLGKDLSNRRKAEEELVVIDPREKARTLKDEKKAARDARQGNSGRAWDQARDAARNAKMAQAASLAGRGAK</sequence>
<protein>
    <recommendedName>
        <fullName>Peptidyl-prolyl isomerase CWC27</fullName>
        <shortName>PPIase CWC27</shortName>
        <ecNumber>5.2.1.8</ecNumber>
    </recommendedName>
    <alternativeName>
        <fullName>Rotamase CWC27</fullName>
    </alternativeName>
</protein>
<comment type="function">
    <text evidence="1">PPIases accelerate the folding of proteins. It catalyzes the cis-trans isomerization of proline imidic peptide bonds in oligopeptides. Involved in pre-mRNA splicing (By similarity).</text>
</comment>
<comment type="catalytic activity">
    <reaction>
        <text>[protein]-peptidylproline (omega=180) = [protein]-peptidylproline (omega=0)</text>
        <dbReference type="Rhea" id="RHEA:16237"/>
        <dbReference type="Rhea" id="RHEA-COMP:10747"/>
        <dbReference type="Rhea" id="RHEA-COMP:10748"/>
        <dbReference type="ChEBI" id="CHEBI:83833"/>
        <dbReference type="ChEBI" id="CHEBI:83834"/>
        <dbReference type="EC" id="5.2.1.8"/>
    </reaction>
</comment>
<comment type="subunit">
    <text evidence="1">Associated with the spliceosome.</text>
</comment>
<comment type="subcellular location">
    <subcellularLocation>
        <location evidence="1">Cytoplasm</location>
    </subcellularLocation>
    <subcellularLocation>
        <location evidence="1">Nucleus</location>
    </subcellularLocation>
</comment>
<comment type="similarity">
    <text evidence="4">Belongs to the cyclophilin-type PPIase family. CWC27 subfamily.</text>
</comment>
<gene>
    <name type="primary">CWC27</name>
    <name type="ORF">FGRRES_00945</name>
    <name type="ORF">FGSG_00945</name>
</gene>
<accession>Q4IPB3</accession>
<accession>A0A098D232</accession>
<accession>A0A0E0RP18</accession>
<accession>V6QX22</accession>
<reference key="1">
    <citation type="journal article" date="2007" name="Science">
        <title>The Fusarium graminearum genome reveals a link between localized polymorphism and pathogen specialization.</title>
        <authorList>
            <person name="Cuomo C.A."/>
            <person name="Gueldener U."/>
            <person name="Xu J.-R."/>
            <person name="Trail F."/>
            <person name="Turgeon B.G."/>
            <person name="Di Pietro A."/>
            <person name="Walton J.D."/>
            <person name="Ma L.-J."/>
            <person name="Baker S.E."/>
            <person name="Rep M."/>
            <person name="Adam G."/>
            <person name="Antoniw J."/>
            <person name="Baldwin T."/>
            <person name="Calvo S.E."/>
            <person name="Chang Y.-L."/>
            <person name="DeCaprio D."/>
            <person name="Gale L.R."/>
            <person name="Gnerre S."/>
            <person name="Goswami R.S."/>
            <person name="Hammond-Kosack K."/>
            <person name="Harris L.J."/>
            <person name="Hilburn K."/>
            <person name="Kennell J.C."/>
            <person name="Kroken S."/>
            <person name="Magnuson J.K."/>
            <person name="Mannhaupt G."/>
            <person name="Mauceli E.W."/>
            <person name="Mewes H.-W."/>
            <person name="Mitterbauer R."/>
            <person name="Muehlbauer G."/>
            <person name="Muensterkoetter M."/>
            <person name="Nelson D."/>
            <person name="O'Donnell K."/>
            <person name="Ouellet T."/>
            <person name="Qi W."/>
            <person name="Quesneville H."/>
            <person name="Roncero M.I.G."/>
            <person name="Seong K.-Y."/>
            <person name="Tetko I.V."/>
            <person name="Urban M."/>
            <person name="Waalwijk C."/>
            <person name="Ward T.J."/>
            <person name="Yao J."/>
            <person name="Birren B.W."/>
            <person name="Kistler H.C."/>
        </authorList>
    </citation>
    <scope>NUCLEOTIDE SEQUENCE [LARGE SCALE GENOMIC DNA]</scope>
    <source>
        <strain>ATCC MYA-4620 / CBS 123657 / FGSC 9075 / NRRL 31084 / PH-1</strain>
    </source>
</reference>
<reference key="2">
    <citation type="journal article" date="2010" name="Nature">
        <title>Comparative genomics reveals mobile pathogenicity chromosomes in Fusarium.</title>
        <authorList>
            <person name="Ma L.-J."/>
            <person name="van der Does H.C."/>
            <person name="Borkovich K.A."/>
            <person name="Coleman J.J."/>
            <person name="Daboussi M.-J."/>
            <person name="Di Pietro A."/>
            <person name="Dufresne M."/>
            <person name="Freitag M."/>
            <person name="Grabherr M."/>
            <person name="Henrissat B."/>
            <person name="Houterman P.M."/>
            <person name="Kang S."/>
            <person name="Shim W.-B."/>
            <person name="Woloshuk C."/>
            <person name="Xie X."/>
            <person name="Xu J.-R."/>
            <person name="Antoniw J."/>
            <person name="Baker S.E."/>
            <person name="Bluhm B.H."/>
            <person name="Breakspear A."/>
            <person name="Brown D.W."/>
            <person name="Butchko R.A.E."/>
            <person name="Chapman S."/>
            <person name="Coulson R."/>
            <person name="Coutinho P.M."/>
            <person name="Danchin E.G.J."/>
            <person name="Diener A."/>
            <person name="Gale L.R."/>
            <person name="Gardiner D.M."/>
            <person name="Goff S."/>
            <person name="Hammond-Kosack K.E."/>
            <person name="Hilburn K."/>
            <person name="Hua-Van A."/>
            <person name="Jonkers W."/>
            <person name="Kazan K."/>
            <person name="Kodira C.D."/>
            <person name="Koehrsen M."/>
            <person name="Kumar L."/>
            <person name="Lee Y.-H."/>
            <person name="Li L."/>
            <person name="Manners J.M."/>
            <person name="Miranda-Saavedra D."/>
            <person name="Mukherjee M."/>
            <person name="Park G."/>
            <person name="Park J."/>
            <person name="Park S.-Y."/>
            <person name="Proctor R.H."/>
            <person name="Regev A."/>
            <person name="Ruiz-Roldan M.C."/>
            <person name="Sain D."/>
            <person name="Sakthikumar S."/>
            <person name="Sykes S."/>
            <person name="Schwartz D.C."/>
            <person name="Turgeon B.G."/>
            <person name="Wapinski I."/>
            <person name="Yoder O."/>
            <person name="Young S."/>
            <person name="Zeng Q."/>
            <person name="Zhou S."/>
            <person name="Galagan J."/>
            <person name="Cuomo C.A."/>
            <person name="Kistler H.C."/>
            <person name="Rep M."/>
        </authorList>
    </citation>
    <scope>GENOME REANNOTATION</scope>
    <source>
        <strain>ATCC MYA-4620 / CBS 123657 / FGSC 9075 / NRRL 31084 / PH-1</strain>
    </source>
</reference>
<reference key="3">
    <citation type="journal article" date="2015" name="BMC Genomics">
        <title>The completed genome sequence of the pathogenic ascomycete fungus Fusarium graminearum.</title>
        <authorList>
            <person name="King R."/>
            <person name="Urban M."/>
            <person name="Hammond-Kosack M.C.U."/>
            <person name="Hassani-Pak K."/>
            <person name="Hammond-Kosack K.E."/>
        </authorList>
    </citation>
    <scope>NUCLEOTIDE SEQUENCE [LARGE SCALE GENOMIC DNA]</scope>
    <source>
        <strain>ATCC MYA-4620 / CBS 123657 / FGSC 9075 / NRRL 31084 / PH-1</strain>
    </source>
</reference>
<proteinExistence type="inferred from homology"/>
<name>CWC27_GIBZE</name>
<feature type="chain" id="PRO_0000064185" description="Peptidyl-prolyl isomerase CWC27">
    <location>
        <begin position="1"/>
        <end position="548"/>
    </location>
</feature>
<feature type="domain" description="PPIase cyclophilin-type" evidence="2">
    <location>
        <begin position="11"/>
        <end position="193"/>
    </location>
</feature>
<feature type="region of interest" description="Disordered" evidence="3">
    <location>
        <begin position="204"/>
        <end position="436"/>
    </location>
</feature>
<feature type="region of interest" description="Disordered" evidence="3">
    <location>
        <begin position="504"/>
        <end position="548"/>
    </location>
</feature>
<feature type="compositionally biased region" description="Basic and acidic residues" evidence="3">
    <location>
        <begin position="328"/>
        <end position="340"/>
    </location>
</feature>
<feature type="compositionally biased region" description="Basic and acidic residues" evidence="3">
    <location>
        <begin position="353"/>
        <end position="366"/>
    </location>
</feature>
<feature type="compositionally biased region" description="Basic and acidic residues" evidence="3">
    <location>
        <begin position="406"/>
        <end position="428"/>
    </location>
</feature>
<feature type="compositionally biased region" description="Basic and acidic residues" evidence="3">
    <location>
        <begin position="504"/>
        <end position="516"/>
    </location>
</feature>
<organism>
    <name type="scientific">Gibberella zeae (strain ATCC MYA-4620 / CBS 123657 / FGSC 9075 / NRRL 31084 / PH-1)</name>
    <name type="common">Wheat head blight fungus</name>
    <name type="synonym">Fusarium graminearum</name>
    <dbReference type="NCBI Taxonomy" id="229533"/>
    <lineage>
        <taxon>Eukaryota</taxon>
        <taxon>Fungi</taxon>
        <taxon>Dikarya</taxon>
        <taxon>Ascomycota</taxon>
        <taxon>Pezizomycotina</taxon>
        <taxon>Sordariomycetes</taxon>
        <taxon>Hypocreomycetidae</taxon>
        <taxon>Hypocreales</taxon>
        <taxon>Nectriaceae</taxon>
        <taxon>Fusarium</taxon>
    </lineage>
</organism>
<keyword id="KW-0963">Cytoplasm</keyword>
<keyword id="KW-0413">Isomerase</keyword>
<keyword id="KW-0507">mRNA processing</keyword>
<keyword id="KW-0508">mRNA splicing</keyword>
<keyword id="KW-0539">Nucleus</keyword>
<keyword id="KW-1185">Reference proteome</keyword>
<keyword id="KW-0697">Rotamase</keyword>
<keyword id="KW-0747">Spliceosome</keyword>
<dbReference type="EC" id="5.2.1.8"/>
<dbReference type="EMBL" id="DS231663">
    <property type="protein sequence ID" value="ESU06202.1"/>
    <property type="molecule type" value="Genomic_DNA"/>
</dbReference>
<dbReference type="EMBL" id="HG970332">
    <property type="protein sequence ID" value="CEF72993.1"/>
    <property type="molecule type" value="Genomic_DNA"/>
</dbReference>
<dbReference type="RefSeq" id="XP_011316687.1">
    <property type="nucleotide sequence ID" value="XM_011318385.1"/>
</dbReference>
<dbReference type="SMR" id="Q4IPB3"/>
<dbReference type="FunCoup" id="Q4IPB3">
    <property type="interactions" value="1120"/>
</dbReference>
<dbReference type="STRING" id="229533.Q4IPB3"/>
<dbReference type="GeneID" id="23548411"/>
<dbReference type="KEGG" id="fgr:FGSG_00945"/>
<dbReference type="VEuPathDB" id="FungiDB:FGRAMPH1_01G02383"/>
<dbReference type="eggNOG" id="KOG0885">
    <property type="taxonomic scope" value="Eukaryota"/>
</dbReference>
<dbReference type="HOGENOM" id="CLU_012062_14_5_1"/>
<dbReference type="InParanoid" id="Q4IPB3"/>
<dbReference type="OrthoDB" id="104792at110618"/>
<dbReference type="Proteomes" id="UP000070720">
    <property type="component" value="Chromosome 1"/>
</dbReference>
<dbReference type="GO" id="GO:0071013">
    <property type="term" value="C:catalytic step 2 spliceosome"/>
    <property type="evidence" value="ECO:0007669"/>
    <property type="project" value="TreeGrafter"/>
</dbReference>
<dbReference type="GO" id="GO:0005737">
    <property type="term" value="C:cytoplasm"/>
    <property type="evidence" value="ECO:0007669"/>
    <property type="project" value="UniProtKB-SubCell"/>
</dbReference>
<dbReference type="GO" id="GO:0003755">
    <property type="term" value="F:peptidyl-prolyl cis-trans isomerase activity"/>
    <property type="evidence" value="ECO:0007669"/>
    <property type="project" value="UniProtKB-KW"/>
</dbReference>
<dbReference type="GO" id="GO:0006397">
    <property type="term" value="P:mRNA processing"/>
    <property type="evidence" value="ECO:0007669"/>
    <property type="project" value="UniProtKB-KW"/>
</dbReference>
<dbReference type="GO" id="GO:0006457">
    <property type="term" value="P:protein folding"/>
    <property type="evidence" value="ECO:0007669"/>
    <property type="project" value="InterPro"/>
</dbReference>
<dbReference type="GO" id="GO:0008380">
    <property type="term" value="P:RNA splicing"/>
    <property type="evidence" value="ECO:0007669"/>
    <property type="project" value="UniProtKB-KW"/>
</dbReference>
<dbReference type="CDD" id="cd01925">
    <property type="entry name" value="cyclophilin_CeCYP16-like"/>
    <property type="match status" value="1"/>
</dbReference>
<dbReference type="FunFam" id="2.40.100.10:FF:000034">
    <property type="entry name" value="Peptidyl-prolyl isomerase CWC27 protein"/>
    <property type="match status" value="1"/>
</dbReference>
<dbReference type="Gene3D" id="2.40.100.10">
    <property type="entry name" value="Cyclophilin-like"/>
    <property type="match status" value="1"/>
</dbReference>
<dbReference type="InterPro" id="IPR029000">
    <property type="entry name" value="Cyclophilin-like_dom_sf"/>
</dbReference>
<dbReference type="InterPro" id="IPR020892">
    <property type="entry name" value="Cyclophilin-type_PPIase_CS"/>
</dbReference>
<dbReference type="InterPro" id="IPR002130">
    <property type="entry name" value="Cyclophilin-type_PPIase_dom"/>
</dbReference>
<dbReference type="InterPro" id="IPR044666">
    <property type="entry name" value="Cyclophilin_A-like"/>
</dbReference>
<dbReference type="PANTHER" id="PTHR45625">
    <property type="entry name" value="PEPTIDYL-PROLYL CIS-TRANS ISOMERASE-RELATED"/>
    <property type="match status" value="1"/>
</dbReference>
<dbReference type="PANTHER" id="PTHR45625:SF6">
    <property type="entry name" value="SPLICEOSOME-ASSOCIATED PROTEIN CWC27 HOMOLOG"/>
    <property type="match status" value="1"/>
</dbReference>
<dbReference type="Pfam" id="PF00160">
    <property type="entry name" value="Pro_isomerase"/>
    <property type="match status" value="1"/>
</dbReference>
<dbReference type="PRINTS" id="PR00153">
    <property type="entry name" value="CSAPPISMRASE"/>
</dbReference>
<dbReference type="SUPFAM" id="SSF50891">
    <property type="entry name" value="Cyclophilin-like"/>
    <property type="match status" value="1"/>
</dbReference>
<dbReference type="PROSITE" id="PS00170">
    <property type="entry name" value="CSA_PPIASE_1"/>
    <property type="match status" value="1"/>
</dbReference>
<dbReference type="PROSITE" id="PS50072">
    <property type="entry name" value="CSA_PPIASE_2"/>
    <property type="match status" value="1"/>
</dbReference>
<evidence type="ECO:0000250" key="1"/>
<evidence type="ECO:0000255" key="2">
    <source>
        <dbReference type="PROSITE-ProRule" id="PRU00156"/>
    </source>
</evidence>
<evidence type="ECO:0000256" key="3">
    <source>
        <dbReference type="SAM" id="MobiDB-lite"/>
    </source>
</evidence>
<evidence type="ECO:0000305" key="4"/>